<feature type="chain" id="PRO_0000180383" description="Ribonuclease 3">
    <location>
        <begin position="1"/>
        <end position="224"/>
    </location>
</feature>
<feature type="domain" description="RNase III" evidence="2">
    <location>
        <begin position="4"/>
        <end position="127"/>
    </location>
</feature>
<feature type="domain" description="DRBM" evidence="2">
    <location>
        <begin position="154"/>
        <end position="223"/>
    </location>
</feature>
<feature type="active site" evidence="2">
    <location>
        <position position="44"/>
    </location>
</feature>
<feature type="active site" evidence="2">
    <location>
        <position position="116"/>
    </location>
</feature>
<feature type="binding site" evidence="2">
    <location>
        <position position="40"/>
    </location>
    <ligand>
        <name>Mg(2+)</name>
        <dbReference type="ChEBI" id="CHEBI:18420"/>
    </ligand>
</feature>
<feature type="binding site" evidence="2">
    <location>
        <position position="113"/>
    </location>
    <ligand>
        <name>Mg(2+)</name>
        <dbReference type="ChEBI" id="CHEBI:18420"/>
    </ligand>
</feature>
<feature type="binding site" evidence="2">
    <location>
        <position position="116"/>
    </location>
    <ligand>
        <name>Mg(2+)</name>
        <dbReference type="ChEBI" id="CHEBI:18420"/>
    </ligand>
</feature>
<feature type="helix" evidence="5">
    <location>
        <begin position="4"/>
        <end position="11"/>
    </location>
</feature>
<feature type="helix" evidence="5">
    <location>
        <begin position="18"/>
        <end position="24"/>
    </location>
</feature>
<feature type="helix" evidence="5">
    <location>
        <begin position="37"/>
        <end position="58"/>
    </location>
</feature>
<feature type="turn" evidence="5">
    <location>
        <begin position="59"/>
        <end position="61"/>
    </location>
</feature>
<feature type="helix" evidence="5">
    <location>
        <begin position="67"/>
        <end position="75"/>
    </location>
</feature>
<feature type="helix" evidence="5">
    <location>
        <begin position="77"/>
        <end position="86"/>
    </location>
</feature>
<feature type="helix" evidence="5">
    <location>
        <begin position="89"/>
        <end position="91"/>
    </location>
</feature>
<feature type="helix" evidence="5">
    <location>
        <begin position="97"/>
        <end position="101"/>
    </location>
</feature>
<feature type="helix" evidence="5">
    <location>
        <begin position="104"/>
        <end position="106"/>
    </location>
</feature>
<feature type="helix" evidence="5">
    <location>
        <begin position="108"/>
        <end position="126"/>
    </location>
</feature>
<feature type="helix" evidence="5">
    <location>
        <begin position="128"/>
        <end position="142"/>
    </location>
</feature>
<organism>
    <name type="scientific">Campylobacter jejuni subsp. jejuni serotype O:2 (strain ATCC 700819 / NCTC 11168)</name>
    <dbReference type="NCBI Taxonomy" id="192222"/>
    <lineage>
        <taxon>Bacteria</taxon>
        <taxon>Pseudomonadati</taxon>
        <taxon>Campylobacterota</taxon>
        <taxon>Epsilonproteobacteria</taxon>
        <taxon>Campylobacterales</taxon>
        <taxon>Campylobacteraceae</taxon>
        <taxon>Campylobacter</taxon>
    </lineage>
</organism>
<sequence>MKNIEKLEQSLTYEFKDKNLLIHALTHKSFKKSYNNERLEFLGDAVLDLVVGEYLFHKFAKDAEGDLSKLRAALVNEKSFAKIANSLNLGDFILMSVAEENNGGKEKPSILSDALEAIIGAIHLEAGFEFAKTIALRLIEKNFPQIDAKILIKDYKTKLQEITQGKIGQTPQYETVRAFGPDHLKQFEIALMLDGKELARAIAGSKKEAQQMAAKIALEKLGAL</sequence>
<comment type="function">
    <text evidence="1">Digests double-stranded RNA. Involved in the processing of primary rRNA transcript to yield the immediate precursors to the large and small rRNAs (23S and 16S). Also processes some mRNAs, and tRNAs when they are encoded in the rRNA operon (By similarity).</text>
</comment>
<comment type="function">
    <text evidence="3 4">CRISPR (clustered regularly interspaced short palindromic repeat) is an adaptive immune system that provides protection against mobile genetic elements (viruses, transposable elements and conjugative plasmids). CRISPR clusters contain spacers, sequences complementary to antecedent mobile elements, and target invading nucleic acids. CRISPR clusters are transcribed and processed into CRISPR RNA (crRNA). In this organism endogenous ribonuclease 3 and Cas9 are required for correct coprocessing of pre-crRNA and the trans-encoded small RNA (tracrRNA). Cas9, crRNA and tracrRNA are required for cleavage of invading DNA (Probable). Complements pre-crRNA and tracrRNA coprocessing defects in an rnc deletion in S.pyogenes strain 370 (PubMed:24270795).</text>
</comment>
<comment type="catalytic activity">
    <reaction evidence="2">
        <text>Endonucleolytic cleavage to 5'-phosphomonoester.</text>
        <dbReference type="EC" id="3.1.26.3"/>
    </reaction>
</comment>
<comment type="cofactor">
    <cofactor evidence="2">
        <name>Mg(2+)</name>
        <dbReference type="ChEBI" id="CHEBI:18420"/>
    </cofactor>
</comment>
<comment type="subunit">
    <text evidence="2">Homodimer.</text>
</comment>
<comment type="subcellular location">
    <subcellularLocation>
        <location evidence="2">Cytoplasm</location>
    </subcellularLocation>
</comment>
<comment type="similarity">
    <text evidence="2">Belongs to the ribonuclease III family.</text>
</comment>
<reference key="1">
    <citation type="journal article" date="2000" name="Nature">
        <title>The genome sequence of the food-borne pathogen Campylobacter jejuni reveals hypervariable sequences.</title>
        <authorList>
            <person name="Parkhill J."/>
            <person name="Wren B.W."/>
            <person name="Mungall K.L."/>
            <person name="Ketley J.M."/>
            <person name="Churcher C.M."/>
            <person name="Basham D."/>
            <person name="Chillingworth T."/>
            <person name="Davies R.M."/>
            <person name="Feltwell T."/>
            <person name="Holroyd S."/>
            <person name="Jagels K."/>
            <person name="Karlyshev A.V."/>
            <person name="Moule S."/>
            <person name="Pallen M.J."/>
            <person name="Penn C.W."/>
            <person name="Quail M.A."/>
            <person name="Rajandream M.A."/>
            <person name="Rutherford K.M."/>
            <person name="van Vliet A.H.M."/>
            <person name="Whitehead S."/>
            <person name="Barrell B.G."/>
        </authorList>
    </citation>
    <scope>NUCLEOTIDE SEQUENCE [LARGE SCALE GENOMIC DNA]</scope>
    <source>
        <strain>ATCC 700819 / NCTC 11168</strain>
    </source>
</reference>
<reference key="2">
    <citation type="journal article" date="2014" name="Nucleic Acids Res.">
        <title>Phylogeny of Cas9 determines functional exchangeability of dual-RNA and Cas9 among orthologous type II CRISPR-Cas systems.</title>
        <authorList>
            <person name="Fonfara I."/>
            <person name="Le Rhun A."/>
            <person name="Chylinski K."/>
            <person name="Makarova K.S."/>
            <person name="Lecrivain A.L."/>
            <person name="Bzdrenga J."/>
            <person name="Koonin E.V."/>
            <person name="Charpentier E."/>
        </authorList>
    </citation>
    <scope>FUNCTION</scope>
    <source>
        <strain>ATCC 700819 / NCTC 11168</strain>
    </source>
</reference>
<name>RNC_CAMJE</name>
<keyword id="KW-0002">3D-structure</keyword>
<keyword id="KW-0963">Cytoplasm</keyword>
<keyword id="KW-0255">Endonuclease</keyword>
<keyword id="KW-0378">Hydrolase</keyword>
<keyword id="KW-0460">Magnesium</keyword>
<keyword id="KW-0479">Metal-binding</keyword>
<keyword id="KW-0507">mRNA processing</keyword>
<keyword id="KW-0540">Nuclease</keyword>
<keyword id="KW-1185">Reference proteome</keyword>
<keyword id="KW-0694">RNA-binding</keyword>
<keyword id="KW-0698">rRNA processing</keyword>
<keyword id="KW-0699">rRNA-binding</keyword>
<keyword id="KW-0819">tRNA processing</keyword>
<accession>Q9PM40</accession>
<accession>Q0P7Z3</accession>
<protein>
    <recommendedName>
        <fullName evidence="2">Ribonuclease 3</fullName>
        <ecNumber evidence="2">3.1.26.3</ecNumber>
    </recommendedName>
    <alternativeName>
        <fullName evidence="2">Ribonuclease III</fullName>
        <shortName evidence="2">RNase III</shortName>
    </alternativeName>
</protein>
<dbReference type="EC" id="3.1.26.3" evidence="2"/>
<dbReference type="EMBL" id="AL111168">
    <property type="protein sequence ID" value="CAL35732.1"/>
    <property type="molecule type" value="Genomic_DNA"/>
</dbReference>
<dbReference type="PIR" id="A81260">
    <property type="entry name" value="A81260"/>
</dbReference>
<dbReference type="RefSeq" id="WP_002851153.1">
    <property type="nucleotide sequence ID" value="NZ_SZUC01000002.1"/>
</dbReference>
<dbReference type="RefSeq" id="YP_002345004.1">
    <property type="nucleotide sequence ID" value="NC_002163.1"/>
</dbReference>
<dbReference type="PDB" id="3N3W">
    <property type="method" value="X-ray"/>
    <property type="resolution" value="2.21 A"/>
    <property type="chains" value="A/B=1-224"/>
</dbReference>
<dbReference type="PDB" id="3O2R">
    <property type="method" value="X-ray"/>
    <property type="resolution" value="1.25 A"/>
    <property type="chains" value="A/B/C/D=1-146"/>
</dbReference>
<dbReference type="PDBsum" id="3N3W"/>
<dbReference type="PDBsum" id="3O2R"/>
<dbReference type="SMR" id="Q9PM40"/>
<dbReference type="IntAct" id="Q9PM40">
    <property type="interactions" value="5"/>
</dbReference>
<dbReference type="STRING" id="192222.Cj1635c"/>
<dbReference type="PaxDb" id="192222-Cj1635c"/>
<dbReference type="EnsemblBacteria" id="CAL35732">
    <property type="protein sequence ID" value="CAL35732"/>
    <property type="gene ID" value="Cj1635c"/>
</dbReference>
<dbReference type="GeneID" id="905908"/>
<dbReference type="KEGG" id="cje:Cj1635c"/>
<dbReference type="PATRIC" id="fig|192222.6.peg.1611"/>
<dbReference type="eggNOG" id="COG0571">
    <property type="taxonomic scope" value="Bacteria"/>
</dbReference>
<dbReference type="HOGENOM" id="CLU_000907_1_3_7"/>
<dbReference type="OrthoDB" id="9805026at2"/>
<dbReference type="EvolutionaryTrace" id="Q9PM40"/>
<dbReference type="Proteomes" id="UP000000799">
    <property type="component" value="Chromosome"/>
</dbReference>
<dbReference type="GO" id="GO:0005737">
    <property type="term" value="C:cytoplasm"/>
    <property type="evidence" value="ECO:0007669"/>
    <property type="project" value="UniProtKB-SubCell"/>
</dbReference>
<dbReference type="GO" id="GO:0003725">
    <property type="term" value="F:double-stranded RNA binding"/>
    <property type="evidence" value="ECO:0007669"/>
    <property type="project" value="TreeGrafter"/>
</dbReference>
<dbReference type="GO" id="GO:0046872">
    <property type="term" value="F:metal ion binding"/>
    <property type="evidence" value="ECO:0007669"/>
    <property type="project" value="UniProtKB-KW"/>
</dbReference>
<dbReference type="GO" id="GO:0004525">
    <property type="term" value="F:ribonuclease III activity"/>
    <property type="evidence" value="ECO:0007669"/>
    <property type="project" value="UniProtKB-UniRule"/>
</dbReference>
<dbReference type="GO" id="GO:0019843">
    <property type="term" value="F:rRNA binding"/>
    <property type="evidence" value="ECO:0007669"/>
    <property type="project" value="UniProtKB-KW"/>
</dbReference>
<dbReference type="GO" id="GO:0006397">
    <property type="term" value="P:mRNA processing"/>
    <property type="evidence" value="ECO:0007669"/>
    <property type="project" value="UniProtKB-UniRule"/>
</dbReference>
<dbReference type="GO" id="GO:0010468">
    <property type="term" value="P:regulation of gene expression"/>
    <property type="evidence" value="ECO:0007669"/>
    <property type="project" value="TreeGrafter"/>
</dbReference>
<dbReference type="GO" id="GO:0006364">
    <property type="term" value="P:rRNA processing"/>
    <property type="evidence" value="ECO:0007669"/>
    <property type="project" value="UniProtKB-UniRule"/>
</dbReference>
<dbReference type="GO" id="GO:0008033">
    <property type="term" value="P:tRNA processing"/>
    <property type="evidence" value="ECO:0007669"/>
    <property type="project" value="UniProtKB-KW"/>
</dbReference>
<dbReference type="CDD" id="cd10845">
    <property type="entry name" value="DSRM_RNAse_III_family"/>
    <property type="match status" value="1"/>
</dbReference>
<dbReference type="CDD" id="cd00593">
    <property type="entry name" value="RIBOc"/>
    <property type="match status" value="1"/>
</dbReference>
<dbReference type="FunFam" id="1.10.1520.10:FF:000001">
    <property type="entry name" value="Ribonuclease 3"/>
    <property type="match status" value="1"/>
</dbReference>
<dbReference type="Gene3D" id="3.30.160.20">
    <property type="match status" value="1"/>
</dbReference>
<dbReference type="Gene3D" id="1.10.1520.10">
    <property type="entry name" value="Ribonuclease III domain"/>
    <property type="match status" value="1"/>
</dbReference>
<dbReference type="HAMAP" id="MF_00104">
    <property type="entry name" value="RNase_III"/>
    <property type="match status" value="1"/>
</dbReference>
<dbReference type="InterPro" id="IPR014720">
    <property type="entry name" value="dsRBD_dom"/>
</dbReference>
<dbReference type="InterPro" id="IPR011907">
    <property type="entry name" value="RNase_III"/>
</dbReference>
<dbReference type="InterPro" id="IPR000999">
    <property type="entry name" value="RNase_III_dom"/>
</dbReference>
<dbReference type="InterPro" id="IPR036389">
    <property type="entry name" value="RNase_III_sf"/>
</dbReference>
<dbReference type="NCBIfam" id="TIGR02191">
    <property type="entry name" value="RNaseIII"/>
    <property type="match status" value="1"/>
</dbReference>
<dbReference type="PANTHER" id="PTHR11207:SF0">
    <property type="entry name" value="RIBONUCLEASE 3"/>
    <property type="match status" value="1"/>
</dbReference>
<dbReference type="PANTHER" id="PTHR11207">
    <property type="entry name" value="RIBONUCLEASE III"/>
    <property type="match status" value="1"/>
</dbReference>
<dbReference type="Pfam" id="PF00035">
    <property type="entry name" value="dsrm"/>
    <property type="match status" value="1"/>
</dbReference>
<dbReference type="Pfam" id="PF14622">
    <property type="entry name" value="Ribonucleas_3_3"/>
    <property type="match status" value="1"/>
</dbReference>
<dbReference type="SMART" id="SM00358">
    <property type="entry name" value="DSRM"/>
    <property type="match status" value="1"/>
</dbReference>
<dbReference type="SMART" id="SM00535">
    <property type="entry name" value="RIBOc"/>
    <property type="match status" value="1"/>
</dbReference>
<dbReference type="SUPFAM" id="SSF54768">
    <property type="entry name" value="dsRNA-binding domain-like"/>
    <property type="match status" value="1"/>
</dbReference>
<dbReference type="SUPFAM" id="SSF69065">
    <property type="entry name" value="RNase III domain-like"/>
    <property type="match status" value="1"/>
</dbReference>
<dbReference type="PROSITE" id="PS50137">
    <property type="entry name" value="DS_RBD"/>
    <property type="match status" value="1"/>
</dbReference>
<dbReference type="PROSITE" id="PS00517">
    <property type="entry name" value="RNASE_3_1"/>
    <property type="match status" value="1"/>
</dbReference>
<dbReference type="PROSITE" id="PS50142">
    <property type="entry name" value="RNASE_3_2"/>
    <property type="match status" value="1"/>
</dbReference>
<proteinExistence type="evidence at protein level"/>
<gene>
    <name evidence="2" type="primary">rnc</name>
    <name type="ordered locus">Cj1635c</name>
</gene>
<evidence type="ECO:0000250" key="1"/>
<evidence type="ECO:0000255" key="2">
    <source>
        <dbReference type="HAMAP-Rule" id="MF_00104"/>
    </source>
</evidence>
<evidence type="ECO:0000269" key="3">
    <source>
    </source>
</evidence>
<evidence type="ECO:0000305" key="4"/>
<evidence type="ECO:0007829" key="5">
    <source>
        <dbReference type="PDB" id="3N3W"/>
    </source>
</evidence>